<name>RL34_PARMW</name>
<feature type="chain" id="PRO_0000187485" description="Large ribosomal subunit protein bL34">
    <location>
        <begin position="1"/>
        <end position="45"/>
    </location>
</feature>
<feature type="region of interest" description="Disordered" evidence="2">
    <location>
        <begin position="1"/>
        <end position="45"/>
    </location>
</feature>
<feature type="compositionally biased region" description="Basic residues" evidence="2">
    <location>
        <begin position="10"/>
        <end position="45"/>
    </location>
</feature>
<keyword id="KW-0687">Ribonucleoprotein</keyword>
<keyword id="KW-0689">Ribosomal protein</keyword>
<gene>
    <name evidence="1" type="primary">rpmH</name>
    <name evidence="1" type="synonym">rpl34</name>
    <name type="ordered locus">SYNW1887</name>
</gene>
<dbReference type="EMBL" id="BX569694">
    <property type="protein sequence ID" value="CAE08402.1"/>
    <property type="molecule type" value="Genomic_DNA"/>
</dbReference>
<dbReference type="RefSeq" id="WP_011128745.1">
    <property type="nucleotide sequence ID" value="NC_005070.1"/>
</dbReference>
<dbReference type="SMR" id="Q7U525"/>
<dbReference type="STRING" id="84588.SYNW1887"/>
<dbReference type="KEGG" id="syw:SYNW1887"/>
<dbReference type="eggNOG" id="COG0230">
    <property type="taxonomic scope" value="Bacteria"/>
</dbReference>
<dbReference type="HOGENOM" id="CLU_129938_2_1_3"/>
<dbReference type="Proteomes" id="UP000001422">
    <property type="component" value="Chromosome"/>
</dbReference>
<dbReference type="GO" id="GO:1990904">
    <property type="term" value="C:ribonucleoprotein complex"/>
    <property type="evidence" value="ECO:0007669"/>
    <property type="project" value="UniProtKB-KW"/>
</dbReference>
<dbReference type="GO" id="GO:0005840">
    <property type="term" value="C:ribosome"/>
    <property type="evidence" value="ECO:0007669"/>
    <property type="project" value="UniProtKB-KW"/>
</dbReference>
<dbReference type="GO" id="GO:0003735">
    <property type="term" value="F:structural constituent of ribosome"/>
    <property type="evidence" value="ECO:0007669"/>
    <property type="project" value="InterPro"/>
</dbReference>
<dbReference type="GO" id="GO:0006412">
    <property type="term" value="P:translation"/>
    <property type="evidence" value="ECO:0007669"/>
    <property type="project" value="UniProtKB-UniRule"/>
</dbReference>
<dbReference type="Gene3D" id="1.10.287.3980">
    <property type="match status" value="1"/>
</dbReference>
<dbReference type="HAMAP" id="MF_00391">
    <property type="entry name" value="Ribosomal_bL34"/>
    <property type="match status" value="1"/>
</dbReference>
<dbReference type="InterPro" id="IPR000271">
    <property type="entry name" value="Ribosomal_bL34"/>
</dbReference>
<dbReference type="InterPro" id="IPR020939">
    <property type="entry name" value="Ribosomal_bL34_CS"/>
</dbReference>
<dbReference type="NCBIfam" id="TIGR01030">
    <property type="entry name" value="rpmH_bact"/>
    <property type="match status" value="1"/>
</dbReference>
<dbReference type="Pfam" id="PF00468">
    <property type="entry name" value="Ribosomal_L34"/>
    <property type="match status" value="1"/>
</dbReference>
<dbReference type="PROSITE" id="PS00784">
    <property type="entry name" value="RIBOSOMAL_L34"/>
    <property type="match status" value="1"/>
</dbReference>
<sequence>MTKRTLGGTSRKRKRVSGFRVRMRSHTGRRVIRTRRKRGRSRLAV</sequence>
<proteinExistence type="inferred from homology"/>
<reference key="1">
    <citation type="journal article" date="2003" name="Nature">
        <title>The genome of a motile marine Synechococcus.</title>
        <authorList>
            <person name="Palenik B."/>
            <person name="Brahamsha B."/>
            <person name="Larimer F.W."/>
            <person name="Land M.L."/>
            <person name="Hauser L."/>
            <person name="Chain P."/>
            <person name="Lamerdin J.E."/>
            <person name="Regala W."/>
            <person name="Allen E.E."/>
            <person name="McCarren J."/>
            <person name="Paulsen I.T."/>
            <person name="Dufresne A."/>
            <person name="Partensky F."/>
            <person name="Webb E.A."/>
            <person name="Waterbury J."/>
        </authorList>
    </citation>
    <scope>NUCLEOTIDE SEQUENCE [LARGE SCALE GENOMIC DNA]</scope>
    <source>
        <strain>WH8102</strain>
    </source>
</reference>
<comment type="similarity">
    <text evidence="1">Belongs to the bacterial ribosomal protein bL34 family.</text>
</comment>
<organism>
    <name type="scientific">Parasynechococcus marenigrum (strain WH8102)</name>
    <dbReference type="NCBI Taxonomy" id="84588"/>
    <lineage>
        <taxon>Bacteria</taxon>
        <taxon>Bacillati</taxon>
        <taxon>Cyanobacteriota</taxon>
        <taxon>Cyanophyceae</taxon>
        <taxon>Synechococcales</taxon>
        <taxon>Prochlorococcaceae</taxon>
        <taxon>Parasynechococcus</taxon>
        <taxon>Parasynechococcus marenigrum</taxon>
    </lineage>
</organism>
<protein>
    <recommendedName>
        <fullName evidence="1">Large ribosomal subunit protein bL34</fullName>
    </recommendedName>
    <alternativeName>
        <fullName evidence="3">50S ribosomal protein L34</fullName>
    </alternativeName>
</protein>
<evidence type="ECO:0000255" key="1">
    <source>
        <dbReference type="HAMAP-Rule" id="MF_00391"/>
    </source>
</evidence>
<evidence type="ECO:0000256" key="2">
    <source>
        <dbReference type="SAM" id="MobiDB-lite"/>
    </source>
</evidence>
<evidence type="ECO:0000305" key="3"/>
<accession>Q7U525</accession>